<sequence>MEAKAIAKFIRVSPRKARMVVDLIRGKKVEEALAILRYTPNKAAAAVTKVVKSAAANAEHNNDMDKEELVVSQIFVDQGPSLKRMMPRAMGRADIIKRRTSHITVVVSDKKEG</sequence>
<dbReference type="EMBL" id="CP000612">
    <property type="protein sequence ID" value="ABO48769.1"/>
    <property type="molecule type" value="Genomic_DNA"/>
</dbReference>
<dbReference type="RefSeq" id="WP_011876609.1">
    <property type="nucleotide sequence ID" value="NC_009253.1"/>
</dbReference>
<dbReference type="SMR" id="A4J116"/>
<dbReference type="STRING" id="349161.Dred_0220"/>
<dbReference type="KEGG" id="drm:Dred_0220"/>
<dbReference type="eggNOG" id="COG0091">
    <property type="taxonomic scope" value="Bacteria"/>
</dbReference>
<dbReference type="HOGENOM" id="CLU_083987_3_3_9"/>
<dbReference type="OrthoDB" id="9805969at2"/>
<dbReference type="Proteomes" id="UP000001556">
    <property type="component" value="Chromosome"/>
</dbReference>
<dbReference type="GO" id="GO:0022625">
    <property type="term" value="C:cytosolic large ribosomal subunit"/>
    <property type="evidence" value="ECO:0007669"/>
    <property type="project" value="TreeGrafter"/>
</dbReference>
<dbReference type="GO" id="GO:0019843">
    <property type="term" value="F:rRNA binding"/>
    <property type="evidence" value="ECO:0007669"/>
    <property type="project" value="UniProtKB-UniRule"/>
</dbReference>
<dbReference type="GO" id="GO:0003735">
    <property type="term" value="F:structural constituent of ribosome"/>
    <property type="evidence" value="ECO:0007669"/>
    <property type="project" value="InterPro"/>
</dbReference>
<dbReference type="GO" id="GO:0006412">
    <property type="term" value="P:translation"/>
    <property type="evidence" value="ECO:0007669"/>
    <property type="project" value="UniProtKB-UniRule"/>
</dbReference>
<dbReference type="CDD" id="cd00336">
    <property type="entry name" value="Ribosomal_L22"/>
    <property type="match status" value="1"/>
</dbReference>
<dbReference type="FunFam" id="3.90.470.10:FF:000001">
    <property type="entry name" value="50S ribosomal protein L22"/>
    <property type="match status" value="1"/>
</dbReference>
<dbReference type="Gene3D" id="3.90.470.10">
    <property type="entry name" value="Ribosomal protein L22/L17"/>
    <property type="match status" value="1"/>
</dbReference>
<dbReference type="HAMAP" id="MF_01331_B">
    <property type="entry name" value="Ribosomal_uL22_B"/>
    <property type="match status" value="1"/>
</dbReference>
<dbReference type="InterPro" id="IPR001063">
    <property type="entry name" value="Ribosomal_uL22"/>
</dbReference>
<dbReference type="InterPro" id="IPR005727">
    <property type="entry name" value="Ribosomal_uL22_bac/chlpt-type"/>
</dbReference>
<dbReference type="InterPro" id="IPR047867">
    <property type="entry name" value="Ribosomal_uL22_bac/org-type"/>
</dbReference>
<dbReference type="InterPro" id="IPR018260">
    <property type="entry name" value="Ribosomal_uL22_CS"/>
</dbReference>
<dbReference type="InterPro" id="IPR036394">
    <property type="entry name" value="Ribosomal_uL22_sf"/>
</dbReference>
<dbReference type="NCBIfam" id="TIGR01044">
    <property type="entry name" value="rplV_bact"/>
    <property type="match status" value="1"/>
</dbReference>
<dbReference type="PANTHER" id="PTHR13501">
    <property type="entry name" value="CHLOROPLAST 50S RIBOSOMAL PROTEIN L22-RELATED"/>
    <property type="match status" value="1"/>
</dbReference>
<dbReference type="PANTHER" id="PTHR13501:SF8">
    <property type="entry name" value="LARGE RIBOSOMAL SUBUNIT PROTEIN UL22M"/>
    <property type="match status" value="1"/>
</dbReference>
<dbReference type="Pfam" id="PF00237">
    <property type="entry name" value="Ribosomal_L22"/>
    <property type="match status" value="1"/>
</dbReference>
<dbReference type="SUPFAM" id="SSF54843">
    <property type="entry name" value="Ribosomal protein L22"/>
    <property type="match status" value="1"/>
</dbReference>
<dbReference type="PROSITE" id="PS00464">
    <property type="entry name" value="RIBOSOMAL_L22"/>
    <property type="match status" value="1"/>
</dbReference>
<protein>
    <recommendedName>
        <fullName evidence="1">Large ribosomal subunit protein uL22</fullName>
    </recommendedName>
    <alternativeName>
        <fullName evidence="2">50S ribosomal protein L22</fullName>
    </alternativeName>
</protein>
<gene>
    <name evidence="1" type="primary">rplV</name>
    <name type="ordered locus">Dred_0220</name>
</gene>
<organism>
    <name type="scientific">Desulforamulus reducens (strain ATCC BAA-1160 / DSM 100696 / MI-1)</name>
    <name type="common">Desulfotomaculum reducens</name>
    <dbReference type="NCBI Taxonomy" id="349161"/>
    <lineage>
        <taxon>Bacteria</taxon>
        <taxon>Bacillati</taxon>
        <taxon>Bacillota</taxon>
        <taxon>Clostridia</taxon>
        <taxon>Eubacteriales</taxon>
        <taxon>Peptococcaceae</taxon>
        <taxon>Desulforamulus</taxon>
    </lineage>
</organism>
<proteinExistence type="inferred from homology"/>
<evidence type="ECO:0000255" key="1">
    <source>
        <dbReference type="HAMAP-Rule" id="MF_01331"/>
    </source>
</evidence>
<evidence type="ECO:0000305" key="2"/>
<feature type="chain" id="PRO_1000073278" description="Large ribosomal subunit protein uL22">
    <location>
        <begin position="1"/>
        <end position="113"/>
    </location>
</feature>
<comment type="function">
    <text evidence="1">This protein binds specifically to 23S rRNA; its binding is stimulated by other ribosomal proteins, e.g. L4, L17, and L20. It is important during the early stages of 50S assembly. It makes multiple contacts with different domains of the 23S rRNA in the assembled 50S subunit and ribosome (By similarity).</text>
</comment>
<comment type="function">
    <text evidence="1">The globular domain of the protein is located near the polypeptide exit tunnel on the outside of the subunit, while an extended beta-hairpin is found that lines the wall of the exit tunnel in the center of the 70S ribosome.</text>
</comment>
<comment type="subunit">
    <text evidence="1">Part of the 50S ribosomal subunit.</text>
</comment>
<comment type="similarity">
    <text evidence="1">Belongs to the universal ribosomal protein uL22 family.</text>
</comment>
<name>RL22_DESRM</name>
<accession>A4J116</accession>
<keyword id="KW-1185">Reference proteome</keyword>
<keyword id="KW-0687">Ribonucleoprotein</keyword>
<keyword id="KW-0689">Ribosomal protein</keyword>
<keyword id="KW-0694">RNA-binding</keyword>
<keyword id="KW-0699">rRNA-binding</keyword>
<reference key="1">
    <citation type="submission" date="2007-03" db="EMBL/GenBank/DDBJ databases">
        <title>Complete sequence of Desulfotomaculum reducens MI-1.</title>
        <authorList>
            <consortium name="US DOE Joint Genome Institute"/>
            <person name="Copeland A."/>
            <person name="Lucas S."/>
            <person name="Lapidus A."/>
            <person name="Barry K."/>
            <person name="Detter J.C."/>
            <person name="Glavina del Rio T."/>
            <person name="Hammon N."/>
            <person name="Israni S."/>
            <person name="Dalin E."/>
            <person name="Tice H."/>
            <person name="Pitluck S."/>
            <person name="Sims D."/>
            <person name="Brettin T."/>
            <person name="Bruce D."/>
            <person name="Han C."/>
            <person name="Tapia R."/>
            <person name="Schmutz J."/>
            <person name="Larimer F."/>
            <person name="Land M."/>
            <person name="Hauser L."/>
            <person name="Kyrpides N."/>
            <person name="Kim E."/>
            <person name="Tebo B.M."/>
            <person name="Richardson P."/>
        </authorList>
    </citation>
    <scope>NUCLEOTIDE SEQUENCE [LARGE SCALE GENOMIC DNA]</scope>
    <source>
        <strain>ATCC BAA-1160 / DSM 100696 / MI-1</strain>
    </source>
</reference>